<comment type="function">
    <text evidence="3">RNA-binding protein that acts as a nuclear receptor corepressor. Probably acts by binding the SRA RNA, and repressing the SRA-mediated nuclear receptor coactivation. Binds the STR7 loop of SRA RNA. Also able to repress glucocorticoid (GR), androgen (AR), thyroid (TR) and VDR-mediated transactivation.</text>
</comment>
<comment type="interaction">
    <interactant intactId="EBI-1050793">
        <id>Q9GZT3</id>
    </interactant>
    <interactant intactId="EBI-17286414">
        <id>A2BDD9</id>
        <label>AMOT</label>
    </interactant>
    <organismsDiffer>false</organismsDiffer>
    <experiments>3</experiments>
</comment>
<comment type="interaction">
    <interactant intactId="EBI-1050793">
        <id>Q9GZT3</id>
    </interactant>
    <interactant intactId="EBI-10171570">
        <id>Q68D86</id>
        <label>CCDC102B</label>
    </interactant>
    <organismsDiffer>false</organismsDiffer>
    <experiments>3</experiments>
</comment>
<comment type="interaction">
    <interactant intactId="EBI-1050793">
        <id>Q9GZT3</id>
    </interactant>
    <interactant intactId="EBI-5916454">
        <id>A6NEM1</id>
        <label>GOLGA6L9</label>
    </interactant>
    <organismsDiffer>false</organismsDiffer>
    <experiments>3</experiments>
</comment>
<comment type="interaction">
    <interactant intactId="EBI-1050793">
        <id>Q9GZT3</id>
    </interactant>
    <interactant intactId="EBI-3044087">
        <id>Q7Z3Y8</id>
        <label>KRT27</label>
    </interactant>
    <organismsDiffer>false</organismsDiffer>
    <experiments>3</experiments>
</comment>
<comment type="interaction">
    <interactant intactId="EBI-1050793">
        <id>Q9GZT3</id>
    </interactant>
    <interactant intactId="EBI-10171697">
        <id>Q6A162</id>
        <label>KRT40</label>
    </interactant>
    <organismsDiffer>false</organismsDiffer>
    <experiments>3</experiments>
</comment>
<comment type="interaction">
    <interactant intactId="EBI-1050793">
        <id>Q9GZT3</id>
    </interactant>
    <interactant intactId="EBI-1050853">
        <id>P42704</id>
        <label>LRPPRC</label>
    </interactant>
    <organismsDiffer>false</organismsDiffer>
    <experiments>5</experiments>
</comment>
<comment type="interaction">
    <interactant intactId="EBI-1050793">
        <id>Q9GZT3</id>
    </interactant>
    <interactant intactId="EBI-742948">
        <id>Q5JR59</id>
        <label>MTUS2</label>
    </interactant>
    <organismsDiffer>false</organismsDiffer>
    <experiments>3</experiments>
</comment>
<comment type="interaction">
    <interactant intactId="EBI-1050793">
        <id>Q9GZT3</id>
    </interactant>
    <interactant intactId="EBI-1246261">
        <id>O14561</id>
        <label>NDUFAB1</label>
    </interactant>
    <organismsDiffer>false</organismsDiffer>
    <experiments>4</experiments>
</comment>
<comment type="interaction">
    <interactant intactId="EBI-1050793">
        <id>Q9GZT3</id>
    </interactant>
    <interactant intactId="EBI-79165">
        <id>Q9NRD5</id>
        <label>PICK1</label>
    </interactant>
    <organismsDiffer>false</organismsDiffer>
    <experiments>3</experiments>
</comment>
<comment type="interaction">
    <interactant intactId="EBI-1050793">
        <id>Q9GZT3</id>
    </interactant>
    <interactant intactId="EBI-302345">
        <id>Q8ND90</id>
        <label>PNMA1</label>
    </interactant>
    <organismsDiffer>false</organismsDiffer>
    <experiments>3</experiments>
</comment>
<comment type="interaction">
    <interactant intactId="EBI-1050793">
        <id>Q9GZT3</id>
    </interactant>
    <interactant intactId="EBI-716112">
        <id>Q8N2I9</id>
        <label>STK40</label>
    </interactant>
    <organismsDiffer>false</organismsDiffer>
    <experiments>3</experiments>
</comment>
<comment type="interaction">
    <interactant intactId="EBI-1050793">
        <id>Q9GZT3</id>
    </interactant>
    <interactant intactId="EBI-751647">
        <id>Q15007</id>
        <label>WTAP</label>
    </interactant>
    <organismsDiffer>false</organismsDiffer>
    <experiments>4</experiments>
</comment>
<comment type="subcellular location">
    <subcellularLocation>
        <location evidence="3">Mitochondrion</location>
    </subcellularLocation>
    <subcellularLocation>
        <location evidence="3">Nucleus</location>
    </subcellularLocation>
    <text>Predominantly mitochondrial. Some fraction is nuclear. In the nucleus, it is recruited to nuclear receptor target promoters.</text>
</comment>
<comment type="alternative products">
    <event type="alternative splicing"/>
    <isoform>
        <id>Q9GZT3-1</id>
        <name>1</name>
        <sequence type="displayed"/>
    </isoform>
    <isoform>
        <id>Q9GZT3-2</id>
        <name>2</name>
        <sequence type="described" ref="VSP_047350"/>
    </isoform>
</comment>
<comment type="tissue specificity">
    <text evidence="3">Ubiquitously expressed, with highest level in heart, liver, skeletal muscle and testis.</text>
</comment>
<reference key="1">
    <citation type="journal article" date="2006" name="Mol. Cell">
        <title>SLIRP, a small SRA binding protein, is a nuclear receptor corepressor.</title>
        <authorList>
            <person name="Hatchell E.C."/>
            <person name="Colley S.M."/>
            <person name="Beveridge D.J."/>
            <person name="Epis M.R."/>
            <person name="Stuart L.M."/>
            <person name="Giles K.M."/>
            <person name="Redfern A.D."/>
            <person name="Miles L.E.C."/>
            <person name="Barker A."/>
            <person name="Macdonald L.M."/>
            <person name="Arthur P.G."/>
            <person name="Lui J.C.K."/>
            <person name="Golding J.L."/>
            <person name="McCulloch R.K."/>
            <person name="Metcalf C.B."/>
            <person name="Wilce J.A."/>
            <person name="Wilce M.C."/>
            <person name="Lanz R.B."/>
            <person name="O'malley B.W."/>
            <person name="Leedman P.J."/>
        </authorList>
    </citation>
    <scope>NUCLEOTIDE SEQUENCE [LARGE SCALE MRNA] (ISOFORM 1)</scope>
    <scope>FUNCTION</scope>
    <scope>RNA-BINDING</scope>
    <scope>SUBCELLULAR LOCATION</scope>
    <scope>TISSUE SPECIFICITY</scope>
    <scope>MUTAGENESIS OF ARG-7; 13-ARG-ARG-14; 24-ARG-ARG-25 AND LEU-62</scope>
</reference>
<reference key="2">
    <citation type="submission" date="2000-02" db="EMBL/GenBank/DDBJ databases">
        <title>Study of 100 skeletal muscle full length mRNA.</title>
        <authorList>
            <person name="Frigimelica E."/>
            <person name="Lanfranchi G."/>
        </authorList>
    </citation>
    <scope>NUCLEOTIDE SEQUENCE [LARGE SCALE MRNA] (ISOFORM 1)</scope>
    <source>
        <tissue>Skeletal muscle</tissue>
    </source>
</reference>
<reference key="3">
    <citation type="submission" date="2000-05" db="EMBL/GenBank/DDBJ databases">
        <authorList>
            <person name="Xu X."/>
            <person name="Yang Y."/>
            <person name="Gao G."/>
            <person name="Xiao H."/>
            <person name="Chen Z."/>
            <person name="Han Z."/>
        </authorList>
    </citation>
    <scope>NUCLEOTIDE SEQUENCE [LARGE SCALE MRNA] (ISOFORM 1)</scope>
    <source>
        <tissue>Dendritic cell</tissue>
    </source>
</reference>
<reference key="4">
    <citation type="journal article" date="2003" name="Nature">
        <title>The DNA sequence and analysis of human chromosome 14.</title>
        <authorList>
            <person name="Heilig R."/>
            <person name="Eckenberg R."/>
            <person name="Petit J.-L."/>
            <person name="Fonknechten N."/>
            <person name="Da Silva C."/>
            <person name="Cattolico L."/>
            <person name="Levy M."/>
            <person name="Barbe V."/>
            <person name="De Berardinis V."/>
            <person name="Ureta-Vidal A."/>
            <person name="Pelletier E."/>
            <person name="Vico V."/>
            <person name="Anthouard V."/>
            <person name="Rowen L."/>
            <person name="Madan A."/>
            <person name="Qin S."/>
            <person name="Sun H."/>
            <person name="Du H."/>
            <person name="Pepin K."/>
            <person name="Artiguenave F."/>
            <person name="Robert C."/>
            <person name="Cruaud C."/>
            <person name="Bruels T."/>
            <person name="Jaillon O."/>
            <person name="Friedlander L."/>
            <person name="Samson G."/>
            <person name="Brottier P."/>
            <person name="Cure S."/>
            <person name="Segurens B."/>
            <person name="Aniere F."/>
            <person name="Samain S."/>
            <person name="Crespeau H."/>
            <person name="Abbasi N."/>
            <person name="Aiach N."/>
            <person name="Boscus D."/>
            <person name="Dickhoff R."/>
            <person name="Dors M."/>
            <person name="Dubois I."/>
            <person name="Friedman C."/>
            <person name="Gouyvenoux M."/>
            <person name="James R."/>
            <person name="Madan A."/>
            <person name="Mairey-Estrada B."/>
            <person name="Mangenot S."/>
            <person name="Martins N."/>
            <person name="Menard M."/>
            <person name="Oztas S."/>
            <person name="Ratcliffe A."/>
            <person name="Shaffer T."/>
            <person name="Trask B."/>
            <person name="Vacherie B."/>
            <person name="Bellemere C."/>
            <person name="Belser C."/>
            <person name="Besnard-Gonnet M."/>
            <person name="Bartol-Mavel D."/>
            <person name="Boutard M."/>
            <person name="Briez-Silla S."/>
            <person name="Combette S."/>
            <person name="Dufosse-Laurent V."/>
            <person name="Ferron C."/>
            <person name="Lechaplais C."/>
            <person name="Louesse C."/>
            <person name="Muselet D."/>
            <person name="Magdelenat G."/>
            <person name="Pateau E."/>
            <person name="Petit E."/>
            <person name="Sirvain-Trukniewicz P."/>
            <person name="Trybou A."/>
            <person name="Vega-Czarny N."/>
            <person name="Bataille E."/>
            <person name="Bluet E."/>
            <person name="Bordelais I."/>
            <person name="Dubois M."/>
            <person name="Dumont C."/>
            <person name="Guerin T."/>
            <person name="Haffray S."/>
            <person name="Hammadi R."/>
            <person name="Muanga J."/>
            <person name="Pellouin V."/>
            <person name="Robert D."/>
            <person name="Wunderle E."/>
            <person name="Gauguet G."/>
            <person name="Roy A."/>
            <person name="Sainte-Marthe L."/>
            <person name="Verdier J."/>
            <person name="Verdier-Discala C."/>
            <person name="Hillier L.W."/>
            <person name="Fulton L."/>
            <person name="McPherson J."/>
            <person name="Matsuda F."/>
            <person name="Wilson R."/>
            <person name="Scarpelli C."/>
            <person name="Gyapay G."/>
            <person name="Wincker P."/>
            <person name="Saurin W."/>
            <person name="Quetier F."/>
            <person name="Waterston R."/>
            <person name="Hood L."/>
            <person name="Weissenbach J."/>
        </authorList>
    </citation>
    <scope>NUCLEOTIDE SEQUENCE [LARGE SCALE GENOMIC DNA]</scope>
</reference>
<reference key="5">
    <citation type="journal article" date="2004" name="Genome Res.">
        <title>The status, quality, and expansion of the NIH full-length cDNA project: the Mammalian Gene Collection (MGC).</title>
        <authorList>
            <consortium name="The MGC Project Team"/>
        </authorList>
    </citation>
    <scope>NUCLEOTIDE SEQUENCE [LARGE SCALE MRNA] (ISOFORMS 1 AND 2)</scope>
    <source>
        <tissue>Prostate</tissue>
    </source>
</reference>
<reference key="6">
    <citation type="journal article" date="2008" name="Proc. Natl. Acad. Sci. U.S.A.">
        <title>A quantitative atlas of mitotic phosphorylation.</title>
        <authorList>
            <person name="Dephoure N."/>
            <person name="Zhou C."/>
            <person name="Villen J."/>
            <person name="Beausoleil S.A."/>
            <person name="Bakalarski C.E."/>
            <person name="Elledge S.J."/>
            <person name="Gygi S.P."/>
        </authorList>
    </citation>
    <scope>PHOSPHORYLATION [LARGE SCALE ANALYSIS] AT SER-102</scope>
    <scope>IDENTIFICATION BY MASS SPECTROMETRY [LARGE SCALE ANALYSIS]</scope>
    <source>
        <tissue>Cervix carcinoma</tissue>
    </source>
</reference>
<reference key="7">
    <citation type="journal article" date="2010" name="Sci. Signal.">
        <title>Quantitative phosphoproteomics reveals widespread full phosphorylation site occupancy during mitosis.</title>
        <authorList>
            <person name="Olsen J.V."/>
            <person name="Vermeulen M."/>
            <person name="Santamaria A."/>
            <person name="Kumar C."/>
            <person name="Miller M.L."/>
            <person name="Jensen L.J."/>
            <person name="Gnad F."/>
            <person name="Cox J."/>
            <person name="Jensen T.S."/>
            <person name="Nigg E.A."/>
            <person name="Brunak S."/>
            <person name="Mann M."/>
        </authorList>
    </citation>
    <scope>PHOSPHORYLATION [LARGE SCALE ANALYSIS] AT SER-102</scope>
    <scope>IDENTIFICATION BY MASS SPECTROMETRY [LARGE SCALE ANALYSIS]</scope>
    <source>
        <tissue>Cervix carcinoma</tissue>
    </source>
</reference>
<reference key="8">
    <citation type="journal article" date="2011" name="BMC Syst. Biol.">
        <title>Initial characterization of the human central proteome.</title>
        <authorList>
            <person name="Burkard T.R."/>
            <person name="Planyavsky M."/>
            <person name="Kaupe I."/>
            <person name="Breitwieser F.P."/>
            <person name="Buerckstuemmer T."/>
            <person name="Bennett K.L."/>
            <person name="Superti-Furga G."/>
            <person name="Colinge J."/>
        </authorList>
    </citation>
    <scope>IDENTIFICATION BY MASS SPECTROMETRY [LARGE SCALE ANALYSIS]</scope>
</reference>
<reference key="9">
    <citation type="journal article" date="2011" name="Sci. Signal.">
        <title>System-wide temporal characterization of the proteome and phosphoproteome of human embryonic stem cell differentiation.</title>
        <authorList>
            <person name="Rigbolt K.T."/>
            <person name="Prokhorova T.A."/>
            <person name="Akimov V."/>
            <person name="Henningsen J."/>
            <person name="Johansen P.T."/>
            <person name="Kratchmarova I."/>
            <person name="Kassem M."/>
            <person name="Mann M."/>
            <person name="Olsen J.V."/>
            <person name="Blagoev B."/>
        </authorList>
    </citation>
    <scope>PHOSPHORYLATION [LARGE SCALE ANALYSIS] AT SER-15 AND SER-102</scope>
    <scope>IDENTIFICATION BY MASS SPECTROMETRY [LARGE SCALE ANALYSIS]</scope>
</reference>
<reference key="10">
    <citation type="journal article" date="2013" name="J. Proteome Res.">
        <title>Toward a comprehensive characterization of a human cancer cell phosphoproteome.</title>
        <authorList>
            <person name="Zhou H."/>
            <person name="Di Palma S."/>
            <person name="Preisinger C."/>
            <person name="Peng M."/>
            <person name="Polat A.N."/>
            <person name="Heck A.J."/>
            <person name="Mohammed S."/>
        </authorList>
    </citation>
    <scope>PHOSPHORYLATION [LARGE SCALE ANALYSIS] AT SER-15 AND SER-102</scope>
    <scope>IDENTIFICATION BY MASS SPECTROMETRY [LARGE SCALE ANALYSIS]</scope>
    <source>
        <tissue>Cervix carcinoma</tissue>
        <tissue>Erythroleukemia</tissue>
    </source>
</reference>
<reference key="11">
    <citation type="journal article" date="2014" name="J. Proteomics">
        <title>An enzyme assisted RP-RPLC approach for in-depth analysis of human liver phosphoproteome.</title>
        <authorList>
            <person name="Bian Y."/>
            <person name="Song C."/>
            <person name="Cheng K."/>
            <person name="Dong M."/>
            <person name="Wang F."/>
            <person name="Huang J."/>
            <person name="Sun D."/>
            <person name="Wang L."/>
            <person name="Ye M."/>
            <person name="Zou H."/>
        </authorList>
    </citation>
    <scope>PHOSPHORYLATION [LARGE SCALE ANALYSIS] AT THR-101</scope>
    <scope>IDENTIFICATION BY MASS SPECTROMETRY [LARGE SCALE ANALYSIS]</scope>
    <source>
        <tissue>Liver</tissue>
    </source>
</reference>
<reference key="12">
    <citation type="journal article" date="2015" name="Proteomics">
        <title>N-terminome analysis of the human mitochondrial proteome.</title>
        <authorList>
            <person name="Vaca Jacome A.S."/>
            <person name="Rabilloud T."/>
            <person name="Schaeffer-Reiss C."/>
            <person name="Rompais M."/>
            <person name="Ayoub D."/>
            <person name="Lane L."/>
            <person name="Bairoch A."/>
            <person name="Van Dorsselaer A."/>
            <person name="Carapito C."/>
        </authorList>
    </citation>
    <scope>IDENTIFICATION BY MASS SPECTROMETRY [LARGE SCALE ANALYSIS]</scope>
</reference>
<gene>
    <name type="primary">SLIRP</name>
    <name type="synonym">C14orf156</name>
    <name type="ORF">DC23</name>
    <name type="ORF">DC50</name>
    <name type="ORF">PD04872</name>
</gene>
<sequence length="109" mass="12349">MAASAARGAAALRRSINQPVAFVRRIPWTAASSQLKEHFAQFGHVRRCILPFDKETGFHRGLGWVQFSSEEGLRNALQQENHIIDGVKVQVHTRRPKLPQTSDDEKKDF</sequence>
<proteinExistence type="evidence at protein level"/>
<dbReference type="EMBL" id="AY860853">
    <property type="protein sequence ID" value="AAX58600.1"/>
    <property type="molecule type" value="mRNA"/>
</dbReference>
<dbReference type="EMBL" id="AJ272055">
    <property type="protein sequence ID" value="CAC81241.1"/>
    <property type="molecule type" value="mRNA"/>
</dbReference>
<dbReference type="EMBL" id="AF253980">
    <property type="protein sequence ID" value="AAG44629.1"/>
    <property type="molecule type" value="mRNA"/>
</dbReference>
<dbReference type="EMBL" id="AF271779">
    <property type="protein sequence ID" value="AAG44790.1"/>
    <property type="molecule type" value="mRNA"/>
</dbReference>
<dbReference type="EMBL" id="BC017895">
    <property type="protein sequence ID" value="AAH17895.1"/>
    <property type="molecule type" value="mRNA"/>
</dbReference>
<dbReference type="EMBL" id="BU535760">
    <property type="status" value="NOT_ANNOTATED_CDS"/>
    <property type="molecule type" value="mRNA"/>
</dbReference>
<dbReference type="CCDS" id="CCDS58331.1">
    <molecule id="Q9GZT3-2"/>
</dbReference>
<dbReference type="CCDS" id="CCDS9866.1">
    <molecule id="Q9GZT3-1"/>
</dbReference>
<dbReference type="RefSeq" id="NP_001254792.1">
    <molecule id="Q9GZT3-2"/>
    <property type="nucleotide sequence ID" value="NM_001267863.1"/>
</dbReference>
<dbReference type="RefSeq" id="NP_001254793.1">
    <property type="nucleotide sequence ID" value="NM_001267864.1"/>
</dbReference>
<dbReference type="RefSeq" id="NP_112487.1">
    <molecule id="Q9GZT3-1"/>
    <property type="nucleotide sequence ID" value="NM_031210.6"/>
</dbReference>
<dbReference type="PDB" id="8ANY">
    <property type="method" value="EM"/>
    <property type="resolution" value="2.85 A"/>
    <property type="chains" value="A6=1-109"/>
</dbReference>
<dbReference type="PDBsum" id="8ANY"/>
<dbReference type="EMDB" id="EMD-15544"/>
<dbReference type="SMR" id="Q9GZT3"/>
<dbReference type="BioGRID" id="123624">
    <property type="interactions" value="348"/>
</dbReference>
<dbReference type="FunCoup" id="Q9GZT3">
    <property type="interactions" value="2023"/>
</dbReference>
<dbReference type="IntAct" id="Q9GZT3">
    <property type="interactions" value="79"/>
</dbReference>
<dbReference type="MINT" id="Q9GZT3"/>
<dbReference type="STRING" id="9606.ENSP00000450909"/>
<dbReference type="GlyGen" id="Q9GZT3">
    <property type="glycosylation" value="1 site, 1 O-linked glycan (1 site)"/>
</dbReference>
<dbReference type="iPTMnet" id="Q9GZT3"/>
<dbReference type="PhosphoSitePlus" id="Q9GZT3"/>
<dbReference type="SwissPalm" id="Q9GZT3"/>
<dbReference type="BioMuta" id="SLIRP"/>
<dbReference type="DMDM" id="74762723"/>
<dbReference type="jPOST" id="Q9GZT3"/>
<dbReference type="MassIVE" id="Q9GZT3"/>
<dbReference type="PaxDb" id="9606-ENSP00000450909"/>
<dbReference type="PeptideAtlas" id="Q9GZT3"/>
<dbReference type="ProteomicsDB" id="80130">
    <molecule id="Q9GZT3-1"/>
</dbReference>
<dbReference type="Pumba" id="Q9GZT3"/>
<dbReference type="TopDownProteomics" id="Q9GZT3-1">
    <molecule id="Q9GZT3-1"/>
</dbReference>
<dbReference type="Antibodypedia" id="13187">
    <property type="antibodies" value="128 antibodies from 21 providers"/>
</dbReference>
<dbReference type="DNASU" id="81892"/>
<dbReference type="Ensembl" id="ENST00000238688.9">
    <molecule id="Q9GZT3-2"/>
    <property type="protein sequence ID" value="ENSP00000238688.5"/>
    <property type="gene ID" value="ENSG00000119705.10"/>
</dbReference>
<dbReference type="Ensembl" id="ENST00000557342.6">
    <molecule id="Q9GZT3-1"/>
    <property type="protein sequence ID" value="ENSP00000450909.1"/>
    <property type="gene ID" value="ENSG00000119705.10"/>
</dbReference>
<dbReference type="GeneID" id="81892"/>
<dbReference type="KEGG" id="hsa:81892"/>
<dbReference type="MANE-Select" id="ENST00000557342.6">
    <property type="protein sequence ID" value="ENSP00000450909.1"/>
    <property type="RefSeq nucleotide sequence ID" value="NM_031210.6"/>
    <property type="RefSeq protein sequence ID" value="NP_112487.1"/>
</dbReference>
<dbReference type="UCSC" id="uc001xue.7">
    <molecule id="Q9GZT3-1"/>
    <property type="organism name" value="human"/>
</dbReference>
<dbReference type="AGR" id="HGNC:20495"/>
<dbReference type="CTD" id="81892"/>
<dbReference type="DisGeNET" id="81892"/>
<dbReference type="GeneCards" id="SLIRP"/>
<dbReference type="HGNC" id="HGNC:20495">
    <property type="gene designation" value="SLIRP"/>
</dbReference>
<dbReference type="HPA" id="ENSG00000119705">
    <property type="expression patterns" value="Low tissue specificity"/>
</dbReference>
<dbReference type="MIM" id="610211">
    <property type="type" value="gene"/>
</dbReference>
<dbReference type="neXtProt" id="NX_Q9GZT3"/>
<dbReference type="OpenTargets" id="ENSG00000119705"/>
<dbReference type="PharmGKB" id="PA134892132"/>
<dbReference type="VEuPathDB" id="HostDB:ENSG00000119705"/>
<dbReference type="eggNOG" id="KOG0118">
    <property type="taxonomic scope" value="Eukaryota"/>
</dbReference>
<dbReference type="GeneTree" id="ENSGT00390000008624"/>
<dbReference type="InParanoid" id="Q9GZT3"/>
<dbReference type="OMA" id="GFVMFSQ"/>
<dbReference type="OrthoDB" id="9537150at2759"/>
<dbReference type="PAN-GO" id="Q9GZT3">
    <property type="GO annotations" value="2 GO annotations based on evolutionary models"/>
</dbReference>
<dbReference type="PhylomeDB" id="Q9GZT3"/>
<dbReference type="TreeFam" id="TF319527"/>
<dbReference type="PathwayCommons" id="Q9GZT3"/>
<dbReference type="Reactome" id="R-HSA-9836573">
    <property type="pathway name" value="Mitochondrial RNA degradation"/>
</dbReference>
<dbReference type="SignaLink" id="Q9GZT3"/>
<dbReference type="BioGRID-ORCS" id="81892">
    <property type="hits" value="82 hits in 1170 CRISPR screens"/>
</dbReference>
<dbReference type="CD-CODE" id="FB4E32DD">
    <property type="entry name" value="Presynaptic clusters and postsynaptic densities"/>
</dbReference>
<dbReference type="ChiTaRS" id="SLIRP">
    <property type="organism name" value="human"/>
</dbReference>
<dbReference type="GenomeRNAi" id="81892"/>
<dbReference type="Pharos" id="Q9GZT3">
    <property type="development level" value="Tbio"/>
</dbReference>
<dbReference type="PRO" id="PR:Q9GZT3"/>
<dbReference type="Proteomes" id="UP000005640">
    <property type="component" value="Chromosome 14"/>
</dbReference>
<dbReference type="RNAct" id="Q9GZT3">
    <property type="molecule type" value="protein"/>
</dbReference>
<dbReference type="Bgee" id="ENSG00000119705">
    <property type="expression patterns" value="Expressed in mucosa of transverse colon and 206 other cell types or tissues"/>
</dbReference>
<dbReference type="ExpressionAtlas" id="Q9GZT3">
    <property type="expression patterns" value="baseline and differential"/>
</dbReference>
<dbReference type="GO" id="GO:0001669">
    <property type="term" value="C:acrosomal vesicle"/>
    <property type="evidence" value="ECO:0007669"/>
    <property type="project" value="Ensembl"/>
</dbReference>
<dbReference type="GO" id="GO:0005759">
    <property type="term" value="C:mitochondrial matrix"/>
    <property type="evidence" value="ECO:0000314"/>
    <property type="project" value="FlyBase"/>
</dbReference>
<dbReference type="GO" id="GO:0005739">
    <property type="term" value="C:mitochondrion"/>
    <property type="evidence" value="ECO:0000314"/>
    <property type="project" value="HPA"/>
</dbReference>
<dbReference type="GO" id="GO:0005634">
    <property type="term" value="C:nucleus"/>
    <property type="evidence" value="ECO:0007669"/>
    <property type="project" value="UniProtKB-SubCell"/>
</dbReference>
<dbReference type="GO" id="GO:0048471">
    <property type="term" value="C:perinuclear region of cytoplasm"/>
    <property type="evidence" value="ECO:0007669"/>
    <property type="project" value="Ensembl"/>
</dbReference>
<dbReference type="GO" id="GO:1990904">
    <property type="term" value="C:ribonucleoprotein complex"/>
    <property type="evidence" value="ECO:0007669"/>
    <property type="project" value="Ensembl"/>
</dbReference>
<dbReference type="GO" id="GO:0036126">
    <property type="term" value="C:sperm flagellum"/>
    <property type="evidence" value="ECO:0007669"/>
    <property type="project" value="Ensembl"/>
</dbReference>
<dbReference type="GO" id="GO:0003723">
    <property type="term" value="F:RNA binding"/>
    <property type="evidence" value="ECO:0007005"/>
    <property type="project" value="UniProtKB"/>
</dbReference>
<dbReference type="GO" id="GO:0030317">
    <property type="term" value="P:flagellated sperm motility"/>
    <property type="evidence" value="ECO:0007669"/>
    <property type="project" value="Ensembl"/>
</dbReference>
<dbReference type="GO" id="GO:0007005">
    <property type="term" value="P:mitochondrion organization"/>
    <property type="evidence" value="ECO:0007669"/>
    <property type="project" value="Ensembl"/>
</dbReference>
<dbReference type="GO" id="GO:0000961">
    <property type="term" value="P:negative regulation of mitochondrial RNA catabolic process"/>
    <property type="evidence" value="ECO:0007669"/>
    <property type="project" value="Ensembl"/>
</dbReference>
<dbReference type="GO" id="GO:0007338">
    <property type="term" value="P:single fertilization"/>
    <property type="evidence" value="ECO:0007669"/>
    <property type="project" value="Ensembl"/>
</dbReference>
<dbReference type="GO" id="GO:0007286">
    <property type="term" value="P:spermatid development"/>
    <property type="evidence" value="ECO:0007669"/>
    <property type="project" value="Ensembl"/>
</dbReference>
<dbReference type="CDD" id="cd12242">
    <property type="entry name" value="RRM_SLIRP"/>
    <property type="match status" value="1"/>
</dbReference>
<dbReference type="FunFam" id="3.30.70.330:FF:000960">
    <property type="entry name" value="SRA stem-loop-interacting RNA-binding protein, mitochondrial"/>
    <property type="match status" value="1"/>
</dbReference>
<dbReference type="Gene3D" id="3.30.70.330">
    <property type="match status" value="1"/>
</dbReference>
<dbReference type="InterPro" id="IPR012677">
    <property type="entry name" value="Nucleotide-bd_a/b_plait_sf"/>
</dbReference>
<dbReference type="InterPro" id="IPR035979">
    <property type="entry name" value="RBD_domain_sf"/>
</dbReference>
<dbReference type="InterPro" id="IPR000504">
    <property type="entry name" value="RRM_dom"/>
</dbReference>
<dbReference type="InterPro" id="IPR052462">
    <property type="entry name" value="SLIRP/GR-RBP-like"/>
</dbReference>
<dbReference type="InterPro" id="IPR034152">
    <property type="entry name" value="SLIRP_RRM"/>
</dbReference>
<dbReference type="PANTHER" id="PTHR48027">
    <property type="entry name" value="HETEROGENEOUS NUCLEAR RIBONUCLEOPROTEIN 87F-RELATED"/>
    <property type="match status" value="1"/>
</dbReference>
<dbReference type="Pfam" id="PF00076">
    <property type="entry name" value="RRM_1"/>
    <property type="match status" value="1"/>
</dbReference>
<dbReference type="SMART" id="SM00360">
    <property type="entry name" value="RRM"/>
    <property type="match status" value="1"/>
</dbReference>
<dbReference type="SUPFAM" id="SSF54928">
    <property type="entry name" value="RNA-binding domain, RBD"/>
    <property type="match status" value="1"/>
</dbReference>
<dbReference type="PROSITE" id="PS50102">
    <property type="entry name" value="RRM"/>
    <property type="match status" value="1"/>
</dbReference>
<organism>
    <name type="scientific">Homo sapiens</name>
    <name type="common">Human</name>
    <dbReference type="NCBI Taxonomy" id="9606"/>
    <lineage>
        <taxon>Eukaryota</taxon>
        <taxon>Metazoa</taxon>
        <taxon>Chordata</taxon>
        <taxon>Craniata</taxon>
        <taxon>Vertebrata</taxon>
        <taxon>Euteleostomi</taxon>
        <taxon>Mammalia</taxon>
        <taxon>Eutheria</taxon>
        <taxon>Euarchontoglires</taxon>
        <taxon>Primates</taxon>
        <taxon>Haplorrhini</taxon>
        <taxon>Catarrhini</taxon>
        <taxon>Hominidae</taxon>
        <taxon>Homo</taxon>
    </lineage>
</organism>
<protein>
    <recommendedName>
        <fullName>SRA stem-loop-interacting RNA-binding protein, mitochondrial</fullName>
    </recommendedName>
</protein>
<evidence type="ECO:0000255" key="1"/>
<evidence type="ECO:0000255" key="2">
    <source>
        <dbReference type="PROSITE-ProRule" id="PRU00176"/>
    </source>
</evidence>
<evidence type="ECO:0000269" key="3">
    <source>
    </source>
</evidence>
<evidence type="ECO:0000303" key="4">
    <source>
    </source>
</evidence>
<evidence type="ECO:0000305" key="5"/>
<evidence type="ECO:0007744" key="6">
    <source>
    </source>
</evidence>
<evidence type="ECO:0007744" key="7">
    <source>
    </source>
</evidence>
<evidence type="ECO:0007744" key="8">
    <source>
    </source>
</evidence>
<evidence type="ECO:0007744" key="9">
    <source>
    </source>
</evidence>
<evidence type="ECO:0007744" key="10">
    <source>
    </source>
</evidence>
<accession>Q9GZT3</accession>
<accession>J3KMY7</accession>
<feature type="transit peptide" description="Mitochondrion" evidence="1">
    <location>
        <begin position="1"/>
        <end status="unknown"/>
    </location>
</feature>
<feature type="chain" id="PRO_0000247051" description="SRA stem-loop-interacting RNA-binding protein, mitochondrial">
    <location>
        <begin status="unknown"/>
        <end position="109"/>
    </location>
</feature>
<feature type="domain" description="RRM" evidence="2">
    <location>
        <begin position="19"/>
        <end position="103"/>
    </location>
</feature>
<feature type="modified residue" description="Phosphoserine" evidence="8 9">
    <location>
        <position position="15"/>
    </location>
</feature>
<feature type="modified residue" description="Phosphothreonine" evidence="10">
    <location>
        <position position="101"/>
    </location>
</feature>
<feature type="modified residue" description="Phosphoserine" evidence="6 7 8 9">
    <location>
        <position position="102"/>
    </location>
</feature>
<feature type="splice variant" id="VSP_047350" description="In isoform 2." evidence="4">
    <location>
        <begin position="89"/>
        <end position="90"/>
    </location>
</feature>
<feature type="mutagenesis site" description="Impairs corepressor activity; when associated with 13-A-A-14." evidence="3">
    <original>R</original>
    <variation>A</variation>
    <location>
        <position position="7"/>
    </location>
</feature>
<feature type="mutagenesis site" description="Impairs corepressor activity; when associated with A-7." evidence="3">
    <original>RR</original>
    <variation>AA</variation>
    <location>
        <begin position="13"/>
        <end position="14"/>
    </location>
</feature>
<feature type="mutagenesis site" description="Impairs SRA-mediated repression; when associated with A-62." evidence="3">
    <original>RR</original>
    <variation>AA</variation>
    <location>
        <begin position="24"/>
        <end position="25"/>
    </location>
</feature>
<feature type="mutagenesis site" description="Impairs SRA-mediated repression; when associated with 24-A-A-25." evidence="3">
    <original>L</original>
    <variation>A</variation>
    <location>
        <position position="62"/>
    </location>
</feature>
<feature type="sequence conflict" description="In Ref. 5; BU535760." evidence="5" ref="5">
    <original>H</original>
    <variation>R</variation>
    <location>
        <position position="44"/>
    </location>
</feature>
<name>SLIRP_HUMAN</name>
<keyword id="KW-0002">3D-structure</keyword>
<keyword id="KW-0025">Alternative splicing</keyword>
<keyword id="KW-0496">Mitochondrion</keyword>
<keyword id="KW-0539">Nucleus</keyword>
<keyword id="KW-0597">Phosphoprotein</keyword>
<keyword id="KW-1267">Proteomics identification</keyword>
<keyword id="KW-1185">Reference proteome</keyword>
<keyword id="KW-0678">Repressor</keyword>
<keyword id="KW-0694">RNA-binding</keyword>
<keyword id="KW-0804">Transcription</keyword>
<keyword id="KW-0805">Transcription regulation</keyword>
<keyword id="KW-0809">Transit peptide</keyword>